<feature type="chain" id="PRO_0000077268" description="Type I restriction enzyme SauMRSORF196P endonuclease subunit">
    <location>
        <begin position="1"/>
        <end position="929"/>
    </location>
</feature>
<feature type="domain" description="Helicase ATP-binding" evidence="2">
    <location>
        <begin position="254"/>
        <end position="418"/>
    </location>
</feature>
<feature type="binding site" evidence="2">
    <location>
        <begin position="268"/>
        <end position="274"/>
    </location>
    <ligand>
        <name>ATP</name>
        <dbReference type="ChEBI" id="CHEBI:30616"/>
    </ligand>
</feature>
<name>HSDR_STAAR</name>
<proteinExistence type="inferred from homology"/>
<organism>
    <name type="scientific">Staphylococcus aureus (strain MRSA252)</name>
    <dbReference type="NCBI Taxonomy" id="282458"/>
    <lineage>
        <taxon>Bacteria</taxon>
        <taxon>Bacillati</taxon>
        <taxon>Bacillota</taxon>
        <taxon>Bacilli</taxon>
        <taxon>Bacillales</taxon>
        <taxon>Staphylococcaceae</taxon>
        <taxon>Staphylococcus</taxon>
    </lineage>
</organism>
<protein>
    <recommendedName>
        <fullName evidence="3">Type I restriction enzyme SauMRSORF196P endonuclease subunit</fullName>
        <shortName>R protein</shortName>
        <shortName evidence="3">SauMRSORF196P</shortName>
        <ecNumber evidence="1">3.1.21.3</ecNumber>
    </recommendedName>
    <alternativeName>
        <fullName>Type-1 restriction enzyme R protein</fullName>
    </alternativeName>
</protein>
<accession>Q6GKB1</accession>
<gene>
    <name type="primary">hsdR</name>
    <name type="ordered locus">SAR0196</name>
</gene>
<sequence>MAYQSEYALENEMMNQLEQLGYERVTIRDNKQLLDNFRTILNERHADKLEGNPLTDKEFQRLLTMIDGKSIFESARILRDKLPLRRDDESEIYLSFLDTKSWCKNKFQVTNQVSVEDTYKARYDVTILINGLPLVQVELKRRGIDINEAFNQVKRYRKQNYTGLFRYIQMFIISNGVETRYFSNNDSELLKSHMFYWSDKQNNRINTLQSFAESFMRPCQLAKMISRYMIINETDRILMAMRPYQVYAVEALIQQATETGNNGYVWHTTGSGKTLTSFKASQILSQQDDIKKVIFLVDRKDLDSQTEEEFNKFAKGAVDKTFNTSQLVRQLNDKSLPLIVTTIQKMAKAIQGNAHLLEQYKTNKVVFIIDECHRSQFGDMHRLVKQHFKNAQYFGFTGTPRFPENSSQDGRTTADIFGRCLHTYLIRDAIHDGNVLGFSVDYINTFKNKALKAEDNSMVEAIDTEEVWLADKRVELVTRHIINNHDKYTRNRQYSSIFTVQSIHALIKYYETFKRLNKKLEQPLTVAGIFTFKPNEDDRDGEVPYHSREKLEIMISDYNKKFETNFSTDTTNEYFNHISKNVKKGVKDSKIDILIVVNMFLTGFDSKVLNTLYVDKNLMYHDLIQAYSRTNRVEKESKPFGKIVNYRDLKKETDDALRVFSQTNDTDTILMRSYEEYKKEFIDAYRELKMIVPTPHMVDDIQDEEELKRFVEAYRLLAKIILRLKAFDEFEFTIDEIGMDEQENEDYKSKYLAVYDQVKRATAEKNKVSILNDIDFEIEMMRNDTINVNYIMNILRQIDLEDKAEQRRNQEQIRRILDHADDPTLRLKRDLIREFIDNVVPSLNKDDDIDQEYVNFESIKKEAEFKGFAGERSIDEQALKTISNDYQYSGVVNPHHLKKMIGDLPLKEKRKARKAIESFVAETTEKYGV</sequence>
<dbReference type="EC" id="3.1.21.3" evidence="1"/>
<dbReference type="EMBL" id="BX571856">
    <property type="protein sequence ID" value="CAG39223.1"/>
    <property type="molecule type" value="Genomic_DNA"/>
</dbReference>
<dbReference type="RefSeq" id="WP_000331344.1">
    <property type="nucleotide sequence ID" value="NC_002952.2"/>
</dbReference>
<dbReference type="SMR" id="Q6GKB1"/>
<dbReference type="REBASE" id="9403">
    <property type="entry name" value="SauMRSORF196P"/>
</dbReference>
<dbReference type="KEGG" id="sar:SAR0196"/>
<dbReference type="HOGENOM" id="CLU_004848_1_0_9"/>
<dbReference type="PRO" id="PR:Q6GKB1"/>
<dbReference type="Proteomes" id="UP000000596">
    <property type="component" value="Chromosome"/>
</dbReference>
<dbReference type="GO" id="GO:0005524">
    <property type="term" value="F:ATP binding"/>
    <property type="evidence" value="ECO:0007669"/>
    <property type="project" value="UniProtKB-KW"/>
</dbReference>
<dbReference type="GO" id="GO:0003677">
    <property type="term" value="F:DNA binding"/>
    <property type="evidence" value="ECO:0007669"/>
    <property type="project" value="UniProtKB-KW"/>
</dbReference>
<dbReference type="GO" id="GO:0009035">
    <property type="term" value="F:type I site-specific deoxyribonuclease activity"/>
    <property type="evidence" value="ECO:0007669"/>
    <property type="project" value="UniProtKB-EC"/>
</dbReference>
<dbReference type="GO" id="GO:0009307">
    <property type="term" value="P:DNA restriction-modification system"/>
    <property type="evidence" value="ECO:0007669"/>
    <property type="project" value="UniProtKB-KW"/>
</dbReference>
<dbReference type="CDD" id="cd18030">
    <property type="entry name" value="DEXHc_RE_I_HsdR"/>
    <property type="match status" value="1"/>
</dbReference>
<dbReference type="CDD" id="cd22332">
    <property type="entry name" value="HsdR_N"/>
    <property type="match status" value="1"/>
</dbReference>
<dbReference type="CDD" id="cd18800">
    <property type="entry name" value="SF2_C_EcoR124I-like"/>
    <property type="match status" value="1"/>
</dbReference>
<dbReference type="Gene3D" id="1.20.58.2040">
    <property type="match status" value="1"/>
</dbReference>
<dbReference type="Gene3D" id="3.90.1570.50">
    <property type="match status" value="1"/>
</dbReference>
<dbReference type="Gene3D" id="3.40.50.300">
    <property type="entry name" value="P-loop containing nucleotide triphosphate hydrolases"/>
    <property type="match status" value="2"/>
</dbReference>
<dbReference type="InterPro" id="IPR014001">
    <property type="entry name" value="Helicase_ATP-bd"/>
</dbReference>
<dbReference type="InterPro" id="IPR055180">
    <property type="entry name" value="HsdR_RecA-like_helicase_dom_2"/>
</dbReference>
<dbReference type="InterPro" id="IPR027417">
    <property type="entry name" value="P-loop_NTPase"/>
</dbReference>
<dbReference type="InterPro" id="IPR007409">
    <property type="entry name" value="Restrct_endonuc_type1_HsdR_N"/>
</dbReference>
<dbReference type="InterPro" id="IPR004473">
    <property type="entry name" value="Restrct_endonuc_typeI_HsdR"/>
</dbReference>
<dbReference type="InterPro" id="IPR040980">
    <property type="entry name" value="SWI2_SNF2"/>
</dbReference>
<dbReference type="InterPro" id="IPR051268">
    <property type="entry name" value="Type-I_R_enzyme_R_subunit"/>
</dbReference>
<dbReference type="InterPro" id="IPR022625">
    <property type="entry name" value="TypeI_RM_Rsu_C"/>
</dbReference>
<dbReference type="NCBIfam" id="TIGR00348">
    <property type="entry name" value="hsdR"/>
    <property type="match status" value="1"/>
</dbReference>
<dbReference type="PANTHER" id="PTHR30195:SF16">
    <property type="entry name" value="TYPE I RESTRICTION ENZYME ENDONUCLEASE SUBUNIT"/>
    <property type="match status" value="1"/>
</dbReference>
<dbReference type="PANTHER" id="PTHR30195">
    <property type="entry name" value="TYPE I SITE-SPECIFIC DEOXYRIBONUCLEASE PROTEIN SUBUNIT M AND R"/>
    <property type="match status" value="1"/>
</dbReference>
<dbReference type="Pfam" id="PF12008">
    <property type="entry name" value="EcoR124_C"/>
    <property type="match status" value="1"/>
</dbReference>
<dbReference type="Pfam" id="PF04313">
    <property type="entry name" value="HSDR_N"/>
    <property type="match status" value="1"/>
</dbReference>
<dbReference type="Pfam" id="PF18766">
    <property type="entry name" value="SWI2_SNF2"/>
    <property type="match status" value="1"/>
</dbReference>
<dbReference type="Pfam" id="PF22679">
    <property type="entry name" value="T1R_D3-like"/>
    <property type="match status" value="1"/>
</dbReference>
<dbReference type="SMART" id="SM00487">
    <property type="entry name" value="DEXDc"/>
    <property type="match status" value="1"/>
</dbReference>
<dbReference type="SUPFAM" id="SSF52540">
    <property type="entry name" value="P-loop containing nucleoside triphosphate hydrolases"/>
    <property type="match status" value="1"/>
</dbReference>
<dbReference type="PROSITE" id="PS51192">
    <property type="entry name" value="HELICASE_ATP_BIND_1"/>
    <property type="match status" value="1"/>
</dbReference>
<reference key="1">
    <citation type="journal article" date="2004" name="Proc. Natl. Acad. Sci. U.S.A.">
        <title>Complete genomes of two clinical Staphylococcus aureus strains: evidence for the rapid evolution of virulence and drug resistance.</title>
        <authorList>
            <person name="Holden M.T.G."/>
            <person name="Feil E.J."/>
            <person name="Lindsay J.A."/>
            <person name="Peacock S.J."/>
            <person name="Day N.P.J."/>
            <person name="Enright M.C."/>
            <person name="Foster T.J."/>
            <person name="Moore C.E."/>
            <person name="Hurst L."/>
            <person name="Atkin R."/>
            <person name="Barron A."/>
            <person name="Bason N."/>
            <person name="Bentley S.D."/>
            <person name="Chillingworth C."/>
            <person name="Chillingworth T."/>
            <person name="Churcher C."/>
            <person name="Clark L."/>
            <person name="Corton C."/>
            <person name="Cronin A."/>
            <person name="Doggett J."/>
            <person name="Dowd L."/>
            <person name="Feltwell T."/>
            <person name="Hance Z."/>
            <person name="Harris B."/>
            <person name="Hauser H."/>
            <person name="Holroyd S."/>
            <person name="Jagels K."/>
            <person name="James K.D."/>
            <person name="Lennard N."/>
            <person name="Line A."/>
            <person name="Mayes R."/>
            <person name="Moule S."/>
            <person name="Mungall K."/>
            <person name="Ormond D."/>
            <person name="Quail M.A."/>
            <person name="Rabbinowitsch E."/>
            <person name="Rutherford K.M."/>
            <person name="Sanders M."/>
            <person name="Sharp S."/>
            <person name="Simmonds M."/>
            <person name="Stevens K."/>
            <person name="Whitehead S."/>
            <person name="Barrell B.G."/>
            <person name="Spratt B.G."/>
            <person name="Parkhill J."/>
        </authorList>
    </citation>
    <scope>NUCLEOTIDE SEQUENCE [LARGE SCALE GENOMIC DNA]</scope>
    <source>
        <strain>MRSA252</strain>
    </source>
</reference>
<reference key="2">
    <citation type="journal article" date="2003" name="Nucleic Acids Res.">
        <title>A nomenclature for restriction enzymes, DNA methyltransferases, homing endonucleases and their genes.</title>
        <authorList>
            <person name="Roberts R.J."/>
            <person name="Belfort M."/>
            <person name="Bestor T."/>
            <person name="Bhagwat A.S."/>
            <person name="Bickle T.A."/>
            <person name="Bitinaite J."/>
            <person name="Blumenthal R.M."/>
            <person name="Degtyarev S.K."/>
            <person name="Dryden D.T."/>
            <person name="Dybvig K."/>
            <person name="Firman K."/>
            <person name="Gromova E.S."/>
            <person name="Gumport R.I."/>
            <person name="Halford S.E."/>
            <person name="Hattman S."/>
            <person name="Heitman J."/>
            <person name="Hornby D.P."/>
            <person name="Janulaitis A."/>
            <person name="Jeltsch A."/>
            <person name="Josephsen J."/>
            <person name="Kiss A."/>
            <person name="Klaenhammer T.R."/>
            <person name="Kobayashi I."/>
            <person name="Kong H."/>
            <person name="Krueger D.H."/>
            <person name="Lacks S."/>
            <person name="Marinus M.G."/>
            <person name="Miyahara M."/>
            <person name="Morgan R.D."/>
            <person name="Murray N.E."/>
            <person name="Nagaraja V."/>
            <person name="Piekarowicz A."/>
            <person name="Pingoud A."/>
            <person name="Raleigh E."/>
            <person name="Rao D.N."/>
            <person name="Reich N."/>
            <person name="Repin V.E."/>
            <person name="Selker E.U."/>
            <person name="Shaw P.C."/>
            <person name="Stein D.C."/>
            <person name="Stoddard B.L."/>
            <person name="Szybalski W."/>
            <person name="Trautner T.A."/>
            <person name="Van Etten J.L."/>
            <person name="Vitor J.M."/>
            <person name="Wilson G.G."/>
            <person name="Xu S.Y."/>
        </authorList>
    </citation>
    <scope>NOMENCLATURE</scope>
</reference>
<evidence type="ECO:0000250" key="1">
    <source>
        <dbReference type="UniProtKB" id="P08956"/>
    </source>
</evidence>
<evidence type="ECO:0000255" key="2">
    <source>
        <dbReference type="PROSITE-ProRule" id="PRU00541"/>
    </source>
</evidence>
<evidence type="ECO:0000303" key="3">
    <source>
    </source>
</evidence>
<evidence type="ECO:0000305" key="4"/>
<keyword id="KW-0067">ATP-binding</keyword>
<keyword id="KW-0238">DNA-binding</keyword>
<keyword id="KW-0255">Endonuclease</keyword>
<keyword id="KW-0378">Hydrolase</keyword>
<keyword id="KW-0540">Nuclease</keyword>
<keyword id="KW-0547">Nucleotide-binding</keyword>
<keyword id="KW-0680">Restriction system</keyword>
<comment type="function">
    <text evidence="1 3">The restriction (R) subunit of a type I restriction enzyme that recognizes an undetermined sequence and cleaves a random distance away. Subunit R is required for both nuclease and ATPase activities, but not for modification. After locating a non-methylated recognition site, the enzyme complex serves as a molecular motor that translocates DNA in an ATP-dependent manner until a collision occurs that triggers cleavage.</text>
</comment>
<comment type="catalytic activity">
    <reaction evidence="1">
        <text>Endonucleolytic cleavage of DNA to give random double-stranded fragments with terminal 5'-phosphates, ATP is simultaneously hydrolyzed.</text>
        <dbReference type="EC" id="3.1.21.3"/>
    </reaction>
</comment>
<comment type="subunit">
    <text evidence="1">The type I restriction/modification system is composed of three polypeptides R, M and S.</text>
</comment>
<comment type="miscellaneous">
    <text evidence="1">Type I restriction and modification enzymes are complex, multifunctional systems which require ATP, S-adenosyl methionine and magnesium as cofactors and, in addition to their endonucleolytic and methylase activities, are potent DNA-dependent ATPases.</text>
</comment>
<comment type="similarity">
    <text evidence="4">Belongs to the HsdR family.</text>
</comment>